<gene>
    <name type="ORF">SPAC2G11.09</name>
</gene>
<sequence>MAFNGYGIFDSDPRKNPSSDLRTQFWLAFLLGASACVFFCFFRKRWKVLYAPRTTIEGLNLPTLSSSYYKWLMDLVNIPDDVVQNCAGLDGYVFLLFFKMGIKFLSFASLLGVLIIMPVNKHFRGDAFGNITLSMPAKSEYFFSSPLVKKSIVQSPIIANGSELNVGVLGPSLFNPIGNLSDIPGLPQPGDGFLYLYVLFTYFISIFLLYVLFSSTKSIADIRQSYLARQNRLTDRTVFISGLPNELCSTENLKAYFDKLDVGSIDSLSICRNYSYMDILLSKKSKYVKKLEKYWSIYLSNCKKLGISTLPPSNYLSPNRAELESTPEQLLEVPWQHHQCHPLIKTHFFGIFGQKIDAIDFYSAKLYKISQQIENARSFDYPTTGQAFITFESMATAQIVAQTHIDSKSLMGLHIELAPAANDIQWHNTYIGRWHKFFQGWFITLVTFMIILLWTVPVGAIAVFINLDTIRRLWPELGRMIEDLPFLNSLLRTFLPTLVYSLFISISPFLFRWLSSMQGLSSRAEEEIYAVGKNYAYLFVNFFLVYVIAGSTSIWELAKDTTSFAHFLANRLPHQAQFFIDLIVLQGIGMFPLKLIQLGKLSSYFVRRSFVPYSIASKKFETPDSFSVGIFLPQPMFIMLICLCYSIISPLILVFGLIYFIIGFLVYKYELIYQMEHPQHSTGELWSTIFLRMIFGCVIMQLTMMGLMSLRKAYWLSTVIFPLLCFTVISAYNFSTMIRSSMQFVSLYYIRTHQSNTLSSESESRNSESSGSYVHPGFDLSNEELPLIDLNTA</sequence>
<organism>
    <name type="scientific">Schizosaccharomyces pombe (strain 972 / ATCC 24843)</name>
    <name type="common">Fission yeast</name>
    <dbReference type="NCBI Taxonomy" id="284812"/>
    <lineage>
        <taxon>Eukaryota</taxon>
        <taxon>Fungi</taxon>
        <taxon>Dikarya</taxon>
        <taxon>Ascomycota</taxon>
        <taxon>Taphrinomycotina</taxon>
        <taxon>Schizosaccharomycetes</taxon>
        <taxon>Schizosaccharomycetales</taxon>
        <taxon>Schizosaccharomycetaceae</taxon>
        <taxon>Schizosaccharomyces</taxon>
    </lineage>
</organism>
<feature type="chain" id="PRO_0000116411" description="Calcium permeable stress-gated cation channel 1">
    <location>
        <begin position="1"/>
        <end position="793"/>
    </location>
</feature>
<feature type="topological domain" description="Lumenal" evidence="2">
    <location>
        <begin position="1"/>
        <end position="21"/>
    </location>
</feature>
<feature type="transmembrane region" description="Helical" evidence="2">
    <location>
        <begin position="22"/>
        <end position="42"/>
    </location>
</feature>
<feature type="topological domain" description="Cytoplasmic" evidence="2">
    <location>
        <begin position="43"/>
        <end position="95"/>
    </location>
</feature>
<feature type="transmembrane region" description="Helical" evidence="2">
    <location>
        <begin position="96"/>
        <end position="116"/>
    </location>
</feature>
<feature type="topological domain" description="Lumenal" evidence="2">
    <location>
        <begin position="117"/>
        <end position="192"/>
    </location>
</feature>
<feature type="transmembrane region" description="Helical" evidence="2">
    <location>
        <begin position="193"/>
        <end position="213"/>
    </location>
</feature>
<feature type="topological domain" description="Cytoplasmic" evidence="2">
    <location>
        <begin position="214"/>
        <end position="444"/>
    </location>
</feature>
<feature type="transmembrane region" description="Helical" evidence="2">
    <location>
        <begin position="445"/>
        <end position="465"/>
    </location>
</feature>
<feature type="topological domain" description="Lumenal" evidence="2">
    <location>
        <begin position="466"/>
        <end position="493"/>
    </location>
</feature>
<feature type="transmembrane region" description="Helical" evidence="2">
    <location>
        <begin position="494"/>
        <end position="514"/>
    </location>
</feature>
<feature type="topological domain" description="Cytoplasmic" evidence="2">
    <location>
        <begin position="515"/>
        <end position="534"/>
    </location>
</feature>
<feature type="transmembrane region" description="Helical" evidence="2">
    <location>
        <begin position="535"/>
        <end position="555"/>
    </location>
</feature>
<feature type="topological domain" description="Lumenal" evidence="2">
    <location>
        <begin position="556"/>
        <end position="577"/>
    </location>
</feature>
<feature type="transmembrane region" description="Helical" evidence="2">
    <location>
        <begin position="578"/>
        <end position="598"/>
    </location>
</feature>
<feature type="topological domain" description="Cytoplasmic" evidence="2">
    <location>
        <begin position="599"/>
        <end position="646"/>
    </location>
</feature>
<feature type="transmembrane region" description="Helical" evidence="2">
    <location>
        <begin position="647"/>
        <end position="667"/>
    </location>
</feature>
<feature type="topological domain" description="Lumenal" evidence="2">
    <location>
        <begin position="668"/>
        <end position="687"/>
    </location>
</feature>
<feature type="transmembrane region" description="Helical" evidence="2">
    <location>
        <begin position="688"/>
        <end position="708"/>
    </location>
</feature>
<feature type="topological domain" description="Cytoplasmic" evidence="2">
    <location>
        <begin position="709"/>
        <end position="713"/>
    </location>
</feature>
<feature type="transmembrane region" description="Helical" evidence="2">
    <location>
        <begin position="714"/>
        <end position="734"/>
    </location>
</feature>
<feature type="topological domain" description="Lumenal" evidence="2">
    <location>
        <begin position="735"/>
        <end position="793"/>
    </location>
</feature>
<feature type="region of interest" description="Disordered" evidence="3">
    <location>
        <begin position="759"/>
        <end position="778"/>
    </location>
</feature>
<protein>
    <recommendedName>
        <fullName>Calcium permeable stress-gated cation channel 1</fullName>
        <shortName>SpCSC1</shortName>
    </recommendedName>
</protein>
<dbReference type="EMBL" id="CU329670">
    <property type="protein sequence ID" value="CAA91174.2"/>
    <property type="molecule type" value="Genomic_DNA"/>
</dbReference>
<dbReference type="PIR" id="T38575">
    <property type="entry name" value="S62464"/>
</dbReference>
<dbReference type="RefSeq" id="NP_593089.2">
    <property type="nucleotide sequence ID" value="NM_001018487.2"/>
</dbReference>
<dbReference type="SMR" id="Q09809"/>
<dbReference type="FunCoup" id="Q09809">
    <property type="interactions" value="86"/>
</dbReference>
<dbReference type="iPTMnet" id="Q09809"/>
<dbReference type="PaxDb" id="4896-SPAC2G11.09.1"/>
<dbReference type="EnsemblFungi" id="SPAC2G11.09.1">
    <property type="protein sequence ID" value="SPAC2G11.09.1:pep"/>
    <property type="gene ID" value="SPAC2G11.09"/>
</dbReference>
<dbReference type="KEGG" id="spo:2541980"/>
<dbReference type="PomBase" id="SPAC2G11.09"/>
<dbReference type="VEuPathDB" id="FungiDB:SPAC2G11.09"/>
<dbReference type="eggNOG" id="KOG1134">
    <property type="taxonomic scope" value="Eukaryota"/>
</dbReference>
<dbReference type="HOGENOM" id="CLU_002458_0_2_1"/>
<dbReference type="InParanoid" id="Q09809"/>
<dbReference type="OMA" id="CSCKKEN"/>
<dbReference type="Reactome" id="R-SPO-6798695">
    <property type="pathway name" value="Neutrophil degranulation"/>
</dbReference>
<dbReference type="PRO" id="PR:Q09809"/>
<dbReference type="Proteomes" id="UP000002485">
    <property type="component" value="Chromosome I"/>
</dbReference>
<dbReference type="GO" id="GO:0000329">
    <property type="term" value="C:fungal-type vacuole membrane"/>
    <property type="evidence" value="ECO:0007005"/>
    <property type="project" value="PomBase"/>
</dbReference>
<dbReference type="GO" id="GO:0005886">
    <property type="term" value="C:plasma membrane"/>
    <property type="evidence" value="ECO:0000318"/>
    <property type="project" value="GO_Central"/>
</dbReference>
<dbReference type="GO" id="GO:0005227">
    <property type="term" value="F:calcium-activated cation channel activity"/>
    <property type="evidence" value="ECO:0000318"/>
    <property type="project" value="GO_Central"/>
</dbReference>
<dbReference type="GO" id="GO:0003676">
    <property type="term" value="F:nucleic acid binding"/>
    <property type="evidence" value="ECO:0007669"/>
    <property type="project" value="InterPro"/>
</dbReference>
<dbReference type="InterPro" id="IPR045122">
    <property type="entry name" value="Csc1-like"/>
</dbReference>
<dbReference type="InterPro" id="IPR003864">
    <property type="entry name" value="CSC1/OSCA1-like_7TM"/>
</dbReference>
<dbReference type="InterPro" id="IPR027815">
    <property type="entry name" value="CSC1/OSCA1-like_cyt"/>
</dbReference>
<dbReference type="InterPro" id="IPR032880">
    <property type="entry name" value="Csc1/OSCA1-like_N"/>
</dbReference>
<dbReference type="InterPro" id="IPR035979">
    <property type="entry name" value="RBD_domain_sf"/>
</dbReference>
<dbReference type="PANTHER" id="PTHR13018">
    <property type="entry name" value="PROBABLE MEMBRANE PROTEIN DUF221-RELATED"/>
    <property type="match status" value="1"/>
</dbReference>
<dbReference type="PANTHER" id="PTHR13018:SF5">
    <property type="entry name" value="RE44586P"/>
    <property type="match status" value="1"/>
</dbReference>
<dbReference type="Pfam" id="PF14703">
    <property type="entry name" value="PHM7_cyt"/>
    <property type="match status" value="1"/>
</dbReference>
<dbReference type="Pfam" id="PF02714">
    <property type="entry name" value="RSN1_7TM"/>
    <property type="match status" value="1"/>
</dbReference>
<dbReference type="Pfam" id="PF13967">
    <property type="entry name" value="RSN1_TM"/>
    <property type="match status" value="1"/>
</dbReference>
<dbReference type="SUPFAM" id="SSF54928">
    <property type="entry name" value="RNA-binding domain, RBD"/>
    <property type="match status" value="1"/>
</dbReference>
<proteinExistence type="inferred from homology"/>
<accession>Q09809</accession>
<evidence type="ECO:0000250" key="1"/>
<evidence type="ECO:0000255" key="2"/>
<evidence type="ECO:0000256" key="3">
    <source>
        <dbReference type="SAM" id="MobiDB-lite"/>
    </source>
</evidence>
<evidence type="ECO:0000305" key="4"/>
<reference key="1">
    <citation type="journal article" date="2002" name="Nature">
        <title>The genome sequence of Schizosaccharomyces pombe.</title>
        <authorList>
            <person name="Wood V."/>
            <person name="Gwilliam R."/>
            <person name="Rajandream M.A."/>
            <person name="Lyne M.H."/>
            <person name="Lyne R."/>
            <person name="Stewart A."/>
            <person name="Sgouros J.G."/>
            <person name="Peat N."/>
            <person name="Hayles J."/>
            <person name="Baker S.G."/>
            <person name="Basham D."/>
            <person name="Bowman S."/>
            <person name="Brooks K."/>
            <person name="Brown D."/>
            <person name="Brown S."/>
            <person name="Chillingworth T."/>
            <person name="Churcher C.M."/>
            <person name="Collins M."/>
            <person name="Connor R."/>
            <person name="Cronin A."/>
            <person name="Davis P."/>
            <person name="Feltwell T."/>
            <person name="Fraser A."/>
            <person name="Gentles S."/>
            <person name="Goble A."/>
            <person name="Hamlin N."/>
            <person name="Harris D.E."/>
            <person name="Hidalgo J."/>
            <person name="Hodgson G."/>
            <person name="Holroyd S."/>
            <person name="Hornsby T."/>
            <person name="Howarth S."/>
            <person name="Huckle E.J."/>
            <person name="Hunt S."/>
            <person name="Jagels K."/>
            <person name="James K.D."/>
            <person name="Jones L."/>
            <person name="Jones M."/>
            <person name="Leather S."/>
            <person name="McDonald S."/>
            <person name="McLean J."/>
            <person name="Mooney P."/>
            <person name="Moule S."/>
            <person name="Mungall K.L."/>
            <person name="Murphy L.D."/>
            <person name="Niblett D."/>
            <person name="Odell C."/>
            <person name="Oliver K."/>
            <person name="O'Neil S."/>
            <person name="Pearson D."/>
            <person name="Quail M.A."/>
            <person name="Rabbinowitsch E."/>
            <person name="Rutherford K.M."/>
            <person name="Rutter S."/>
            <person name="Saunders D."/>
            <person name="Seeger K."/>
            <person name="Sharp S."/>
            <person name="Skelton J."/>
            <person name="Simmonds M.N."/>
            <person name="Squares R."/>
            <person name="Squares S."/>
            <person name="Stevens K."/>
            <person name="Taylor K."/>
            <person name="Taylor R.G."/>
            <person name="Tivey A."/>
            <person name="Walsh S.V."/>
            <person name="Warren T."/>
            <person name="Whitehead S."/>
            <person name="Woodward J.R."/>
            <person name="Volckaert G."/>
            <person name="Aert R."/>
            <person name="Robben J."/>
            <person name="Grymonprez B."/>
            <person name="Weltjens I."/>
            <person name="Vanstreels E."/>
            <person name="Rieger M."/>
            <person name="Schaefer M."/>
            <person name="Mueller-Auer S."/>
            <person name="Gabel C."/>
            <person name="Fuchs M."/>
            <person name="Duesterhoeft A."/>
            <person name="Fritzc C."/>
            <person name="Holzer E."/>
            <person name="Moestl D."/>
            <person name="Hilbert H."/>
            <person name="Borzym K."/>
            <person name="Langer I."/>
            <person name="Beck A."/>
            <person name="Lehrach H."/>
            <person name="Reinhardt R."/>
            <person name="Pohl T.M."/>
            <person name="Eger P."/>
            <person name="Zimmermann W."/>
            <person name="Wedler H."/>
            <person name="Wambutt R."/>
            <person name="Purnelle B."/>
            <person name="Goffeau A."/>
            <person name="Cadieu E."/>
            <person name="Dreano S."/>
            <person name="Gloux S."/>
            <person name="Lelaure V."/>
            <person name="Mottier S."/>
            <person name="Galibert F."/>
            <person name="Aves S.J."/>
            <person name="Xiang Z."/>
            <person name="Hunt C."/>
            <person name="Moore K."/>
            <person name="Hurst S.M."/>
            <person name="Lucas M."/>
            <person name="Rochet M."/>
            <person name="Gaillardin C."/>
            <person name="Tallada V.A."/>
            <person name="Garzon A."/>
            <person name="Thode G."/>
            <person name="Daga R.R."/>
            <person name="Cruzado L."/>
            <person name="Jimenez J."/>
            <person name="Sanchez M."/>
            <person name="del Rey F."/>
            <person name="Benito J."/>
            <person name="Dominguez A."/>
            <person name="Revuelta J.L."/>
            <person name="Moreno S."/>
            <person name="Armstrong J."/>
            <person name="Forsburg S.L."/>
            <person name="Cerutti L."/>
            <person name="Lowe T."/>
            <person name="McCombie W.R."/>
            <person name="Paulsen I."/>
            <person name="Potashkin J."/>
            <person name="Shpakovski G.V."/>
            <person name="Ussery D."/>
            <person name="Barrell B.G."/>
            <person name="Nurse P."/>
        </authorList>
    </citation>
    <scope>NUCLEOTIDE SEQUENCE [LARGE SCALE GENOMIC DNA]</scope>
    <source>
        <strain>972 / ATCC 24843</strain>
    </source>
</reference>
<reference key="2">
    <citation type="journal article" date="2011" name="Science">
        <title>Comparative functional genomics of the fission yeasts.</title>
        <authorList>
            <person name="Rhind N."/>
            <person name="Chen Z."/>
            <person name="Yassour M."/>
            <person name="Thompson D.A."/>
            <person name="Haas B.J."/>
            <person name="Habib N."/>
            <person name="Wapinski I."/>
            <person name="Roy S."/>
            <person name="Lin M.F."/>
            <person name="Heiman D.I."/>
            <person name="Young S.K."/>
            <person name="Furuya K."/>
            <person name="Guo Y."/>
            <person name="Pidoux A."/>
            <person name="Chen H.M."/>
            <person name="Robbertse B."/>
            <person name="Goldberg J.M."/>
            <person name="Aoki K."/>
            <person name="Bayne E.H."/>
            <person name="Berlin A.M."/>
            <person name="Desjardins C.A."/>
            <person name="Dobbs E."/>
            <person name="Dukaj L."/>
            <person name="Fan L."/>
            <person name="FitzGerald M.G."/>
            <person name="French C."/>
            <person name="Gujja S."/>
            <person name="Hansen K."/>
            <person name="Keifenheim D."/>
            <person name="Levin J.Z."/>
            <person name="Mosher R.A."/>
            <person name="Mueller C.A."/>
            <person name="Pfiffner J."/>
            <person name="Priest M."/>
            <person name="Russ C."/>
            <person name="Smialowska A."/>
            <person name="Swoboda P."/>
            <person name="Sykes S.M."/>
            <person name="Vaughn M."/>
            <person name="Vengrova S."/>
            <person name="Yoder R."/>
            <person name="Zeng Q."/>
            <person name="Allshire R."/>
            <person name="Baulcombe D."/>
            <person name="Birren B.W."/>
            <person name="Brown W."/>
            <person name="Ekwall K."/>
            <person name="Kellis M."/>
            <person name="Leatherwood J."/>
            <person name="Levin H."/>
            <person name="Margalit H."/>
            <person name="Martienssen R."/>
            <person name="Nieduszynski C.A."/>
            <person name="Spatafora J.W."/>
            <person name="Friedman N."/>
            <person name="Dalgaard J.Z."/>
            <person name="Baumann P."/>
            <person name="Niki H."/>
            <person name="Regev A."/>
            <person name="Nusbaum C."/>
        </authorList>
    </citation>
    <scope>REVISION OF GENE MODEL</scope>
</reference>
<reference key="3">
    <citation type="journal article" date="2006" name="Nat. Biotechnol.">
        <title>ORFeome cloning and global analysis of protein localization in the fission yeast Schizosaccharomyces pombe.</title>
        <authorList>
            <person name="Matsuyama A."/>
            <person name="Arai R."/>
            <person name="Yashiroda Y."/>
            <person name="Shirai A."/>
            <person name="Kamata A."/>
            <person name="Sekido S."/>
            <person name="Kobayashi Y."/>
            <person name="Hashimoto A."/>
            <person name="Hamamoto M."/>
            <person name="Hiraoka Y."/>
            <person name="Horinouchi S."/>
            <person name="Yoshida M."/>
        </authorList>
    </citation>
    <scope>SUBCELLULAR LOCATION [LARGE SCALE ANALYSIS]</scope>
</reference>
<keyword id="KW-0106">Calcium</keyword>
<keyword id="KW-0407">Ion channel</keyword>
<keyword id="KW-0406">Ion transport</keyword>
<keyword id="KW-0472">Membrane</keyword>
<keyword id="KW-1185">Reference proteome</keyword>
<keyword id="KW-0812">Transmembrane</keyword>
<keyword id="KW-1133">Transmembrane helix</keyword>
<keyword id="KW-0813">Transport</keyword>
<keyword id="KW-0926">Vacuole</keyword>
<comment type="function">
    <text evidence="1">Acts as an osmosensitive calcium-permeable cation channel.</text>
</comment>
<comment type="subcellular location">
    <subcellularLocation>
        <location evidence="4">Vacuole membrane</location>
        <topology evidence="4">Multi-pass membrane protein</topology>
    </subcellularLocation>
</comment>
<comment type="similarity">
    <text evidence="4">Belongs to the CSC1 (TC 1.A.17) family.</text>
</comment>
<name>CSC1_SCHPO</name>